<feature type="signal peptide" evidence="4">
    <location>
        <begin position="1"/>
        <end position="22"/>
    </location>
</feature>
<feature type="chain" id="PRO_5000095844" description="Podocalyxin">
    <location>
        <begin position="23"/>
        <end position="571"/>
    </location>
</feature>
<feature type="topological domain" description="Extracellular" evidence="4">
    <location>
        <begin position="23"/>
        <end position="474"/>
    </location>
</feature>
<feature type="transmembrane region" description="Helical" evidence="4">
    <location>
        <begin position="475"/>
        <end position="495"/>
    </location>
</feature>
<feature type="topological domain" description="Cytoplasmic" evidence="4">
    <location>
        <begin position="496"/>
        <end position="571"/>
    </location>
</feature>
<feature type="region of interest" description="Disordered" evidence="5">
    <location>
        <begin position="94"/>
        <end position="361"/>
    </location>
</feature>
<feature type="compositionally biased region" description="Polar residues" evidence="5">
    <location>
        <begin position="106"/>
        <end position="116"/>
    </location>
</feature>
<feature type="compositionally biased region" description="Polar residues" evidence="5">
    <location>
        <begin position="126"/>
        <end position="144"/>
    </location>
</feature>
<feature type="compositionally biased region" description="Polar residues" evidence="5">
    <location>
        <begin position="151"/>
        <end position="169"/>
    </location>
</feature>
<feature type="compositionally biased region" description="Polar residues" evidence="5">
    <location>
        <begin position="176"/>
        <end position="203"/>
    </location>
</feature>
<feature type="compositionally biased region" description="Polar residues" evidence="5">
    <location>
        <begin position="218"/>
        <end position="245"/>
    </location>
</feature>
<feature type="compositionally biased region" description="Low complexity" evidence="5">
    <location>
        <begin position="282"/>
        <end position="300"/>
    </location>
</feature>
<feature type="compositionally biased region" description="Pro residues" evidence="5">
    <location>
        <begin position="301"/>
        <end position="311"/>
    </location>
</feature>
<feature type="compositionally biased region" description="Low complexity" evidence="5">
    <location>
        <begin position="312"/>
        <end position="322"/>
    </location>
</feature>
<feature type="modified residue" description="Phosphothreonine" evidence="3">
    <location>
        <position position="531"/>
    </location>
</feature>
<feature type="modified residue" description="Phosphoserine" evidence="2">
    <location>
        <position position="550"/>
    </location>
</feature>
<feature type="modified residue" description="Phosphothreonine" evidence="2">
    <location>
        <position position="569"/>
    </location>
</feature>
<feature type="glycosylation site" description="N-linked (GlcNAc...) asparagine" evidence="4">
    <location>
        <position position="123"/>
    </location>
</feature>
<feature type="glycosylation site" description="N-linked (GlcNAc...) asparagine" evidence="7 8">
    <location>
        <position position="199"/>
    </location>
</feature>
<feature type="glycosylation site" description="N-linked (GlcNAc...) asparagine" evidence="7 8">
    <location>
        <position position="373"/>
    </location>
</feature>
<feature type="glycosylation site" description="N-linked (GlcNAc...) asparagine" evidence="7 8">
    <location>
        <position position="383"/>
    </location>
</feature>
<feature type="mutagenesis site" description="Does not reduce N-glycosylation." evidence="7">
    <original>N</original>
    <variation>Q</variation>
    <location>
        <position position="123"/>
    </location>
</feature>
<feature type="mutagenesis site" description="Reduces N-glycosylation but not apical targeting. Strongly reduces N-glycosylation but not apical targeting; when associated with Q-373 and Q-383." evidence="7 8">
    <original>N</original>
    <variation>Q</variation>
    <location>
        <position position="199"/>
    </location>
</feature>
<feature type="mutagenesis site" description="Reduces N-glycosylation but not apical targeting. Strongly reduces N-glycosylation but not apical targeting; when associated with Q-199 and Q-383." evidence="7 8">
    <original>N</original>
    <variation>Q</variation>
    <location>
        <position position="373"/>
    </location>
</feature>
<feature type="mutagenesis site" description="Reduces N-glycosylation but not apical targeting. Strongly reduces N-glycosylation but not apical targeting; when associated with Q-199 and Q-373." evidence="7 8">
    <original>N</original>
    <variation>Q</variation>
    <location>
        <position position="383"/>
    </location>
</feature>
<proteinExistence type="evidence at protein level"/>
<evidence type="ECO:0000250" key="1"/>
<evidence type="ECO:0000250" key="2">
    <source>
        <dbReference type="UniProtKB" id="O00592"/>
    </source>
</evidence>
<evidence type="ECO:0000250" key="3">
    <source>
        <dbReference type="UniProtKB" id="Q9R0M4"/>
    </source>
</evidence>
<evidence type="ECO:0000255" key="4"/>
<evidence type="ECO:0000256" key="5">
    <source>
        <dbReference type="SAM" id="MobiDB-lite"/>
    </source>
</evidence>
<evidence type="ECO:0000269" key="6">
    <source>
    </source>
</evidence>
<evidence type="ECO:0000269" key="7">
    <source>
    </source>
</evidence>
<evidence type="ECO:0000269" key="8">
    <source>
    </source>
</evidence>
<evidence type="ECO:0000305" key="9"/>
<gene>
    <name type="primary">PODXL</name>
    <name type="synonym">PCLP</name>
    <name type="synonym">PCLP1</name>
</gene>
<keyword id="KW-0130">Cell adhesion</keyword>
<keyword id="KW-1003">Cell membrane</keyword>
<keyword id="KW-0966">Cell projection</keyword>
<keyword id="KW-0903">Direct protein sequencing</keyword>
<keyword id="KW-0325">Glycoprotein</keyword>
<keyword id="KW-0472">Membrane</keyword>
<keyword id="KW-0597">Phosphoprotein</keyword>
<keyword id="KW-1185">Reference proteome</keyword>
<keyword id="KW-0732">Signal</keyword>
<keyword id="KW-0812">Transmembrane</keyword>
<keyword id="KW-1133">Transmembrane helix</keyword>
<name>PODXL_CANLF</name>
<dbReference type="EMBL" id="AY970669">
    <property type="protein sequence ID" value="AAX93749.1"/>
    <property type="molecule type" value="mRNA"/>
</dbReference>
<dbReference type="RefSeq" id="NP_001018645.1">
    <property type="nucleotide sequence ID" value="NM_001020809.1"/>
</dbReference>
<dbReference type="FunCoup" id="Q52S86">
    <property type="interactions" value="4"/>
</dbReference>
<dbReference type="STRING" id="9615.ENSCAFP00000002008"/>
<dbReference type="GlyCosmos" id="Q52S86">
    <property type="glycosylation" value="4 sites, No reported glycans"/>
</dbReference>
<dbReference type="iPTMnet" id="Q52S86"/>
<dbReference type="SwissPalm" id="Q52S86"/>
<dbReference type="PaxDb" id="9612-ENSCAFP00000041563"/>
<dbReference type="Ensembl" id="ENSCAFT00000002169.6">
    <property type="protein sequence ID" value="ENSCAFP00000002008.5"/>
    <property type="gene ID" value="ENSCAFG00000001403.6"/>
</dbReference>
<dbReference type="GeneID" id="482252"/>
<dbReference type="KEGG" id="cfa:482252"/>
<dbReference type="CTD" id="5420"/>
<dbReference type="VGNC" id="VGNC:54792">
    <property type="gene designation" value="PODXL"/>
</dbReference>
<dbReference type="eggNOG" id="ENOG502S2JU">
    <property type="taxonomic scope" value="Eukaryota"/>
</dbReference>
<dbReference type="InParanoid" id="Q52S86"/>
<dbReference type="OrthoDB" id="9948358at2759"/>
<dbReference type="Proteomes" id="UP000002254">
    <property type="component" value="Chromosome 14"/>
</dbReference>
<dbReference type="Proteomes" id="UP000694429">
    <property type="component" value="Unplaced"/>
</dbReference>
<dbReference type="Proteomes" id="UP000694542">
    <property type="component" value="Unplaced"/>
</dbReference>
<dbReference type="Proteomes" id="UP000805418">
    <property type="component" value="Unplaced"/>
</dbReference>
<dbReference type="GO" id="GO:0016324">
    <property type="term" value="C:apical plasma membrane"/>
    <property type="evidence" value="ECO:0000314"/>
    <property type="project" value="UniProtKB"/>
</dbReference>
<dbReference type="GO" id="GO:0005737">
    <property type="term" value="C:cytoplasm"/>
    <property type="evidence" value="ECO:0000250"/>
    <property type="project" value="UniProtKB"/>
</dbReference>
<dbReference type="GO" id="GO:0030175">
    <property type="term" value="C:filopodium"/>
    <property type="evidence" value="ECO:0000250"/>
    <property type="project" value="UniProtKB"/>
</dbReference>
<dbReference type="GO" id="GO:0030027">
    <property type="term" value="C:lamellipodium"/>
    <property type="evidence" value="ECO:0000250"/>
    <property type="project" value="UniProtKB"/>
</dbReference>
<dbReference type="GO" id="GO:0045121">
    <property type="term" value="C:membrane raft"/>
    <property type="evidence" value="ECO:0007669"/>
    <property type="project" value="UniProtKB-SubCell"/>
</dbReference>
<dbReference type="GO" id="GO:0031528">
    <property type="term" value="C:microvillus membrane"/>
    <property type="evidence" value="ECO:0000250"/>
    <property type="project" value="UniProtKB"/>
</dbReference>
<dbReference type="GO" id="GO:0005886">
    <property type="term" value="C:plasma membrane"/>
    <property type="evidence" value="ECO:0000250"/>
    <property type="project" value="UniProtKB"/>
</dbReference>
<dbReference type="GO" id="GO:0001726">
    <property type="term" value="C:ruffle"/>
    <property type="evidence" value="ECO:0000250"/>
    <property type="project" value="UniProtKB"/>
</dbReference>
<dbReference type="GO" id="GO:0036057">
    <property type="term" value="C:slit diaphragm"/>
    <property type="evidence" value="ECO:0000250"/>
    <property type="project" value="UniProtKB"/>
</dbReference>
<dbReference type="GO" id="GO:0007155">
    <property type="term" value="P:cell adhesion"/>
    <property type="evidence" value="ECO:0007669"/>
    <property type="project" value="UniProtKB-KW"/>
</dbReference>
<dbReference type="GO" id="GO:0016477">
    <property type="term" value="P:cell migration"/>
    <property type="evidence" value="ECO:0000250"/>
    <property type="project" value="UniProtKB"/>
</dbReference>
<dbReference type="GO" id="GO:0072175">
    <property type="term" value="P:epithelial tube formation"/>
    <property type="evidence" value="ECO:0000314"/>
    <property type="project" value="UniProtKB"/>
</dbReference>
<dbReference type="GO" id="GO:0007162">
    <property type="term" value="P:negative regulation of cell adhesion"/>
    <property type="evidence" value="ECO:0000250"/>
    <property type="project" value="UniProtKB"/>
</dbReference>
<dbReference type="GO" id="GO:0022408">
    <property type="term" value="P:negative regulation of cell-cell adhesion"/>
    <property type="evidence" value="ECO:0000250"/>
    <property type="project" value="UniProtKB"/>
</dbReference>
<dbReference type="GO" id="GO:0072015">
    <property type="term" value="P:podocyte development"/>
    <property type="evidence" value="ECO:0000250"/>
    <property type="project" value="UniProtKB"/>
</dbReference>
<dbReference type="GO" id="GO:0030335">
    <property type="term" value="P:positive regulation of cell migration"/>
    <property type="evidence" value="ECO:0000250"/>
    <property type="project" value="UniProtKB"/>
</dbReference>
<dbReference type="GO" id="GO:0033634">
    <property type="term" value="P:positive regulation of cell-cell adhesion mediated by integrin"/>
    <property type="evidence" value="ECO:0000250"/>
    <property type="project" value="UniProtKB"/>
</dbReference>
<dbReference type="GO" id="GO:0032534">
    <property type="term" value="P:regulation of microvillus assembly"/>
    <property type="evidence" value="ECO:0000250"/>
    <property type="project" value="UniProtKB"/>
</dbReference>
<dbReference type="InterPro" id="IPR013836">
    <property type="entry name" value="CD34/Podocalyxin"/>
</dbReference>
<dbReference type="InterPro" id="IPR017403">
    <property type="entry name" value="PODXL"/>
</dbReference>
<dbReference type="PANTHER" id="PTHR12067">
    <property type="entry name" value="PODOCALYXIN"/>
    <property type="match status" value="1"/>
</dbReference>
<dbReference type="PANTHER" id="PTHR12067:SF5">
    <property type="entry name" value="PODOCALYXIN"/>
    <property type="match status" value="1"/>
</dbReference>
<dbReference type="Pfam" id="PF06365">
    <property type="entry name" value="CD34_antigen"/>
    <property type="match status" value="1"/>
</dbReference>
<dbReference type="PIRSF" id="PIRSF038143">
    <property type="entry name" value="Podocalyxin-like_p1"/>
    <property type="match status" value="1"/>
</dbReference>
<protein>
    <recommendedName>
        <fullName>Podocalyxin</fullName>
    </recommendedName>
    <alternativeName>
        <fullName>Gp135</fullName>
    </alternativeName>
    <alternativeName>
        <fullName>Podocalyxin-like protein 1</fullName>
        <shortName>PC</shortName>
        <shortName>PC-like protein 1</shortName>
        <shortName>PCLP-1</shortName>
        <shortName>cPCLP1</shortName>
    </alternativeName>
</protein>
<organism>
    <name type="scientific">Canis lupus familiaris</name>
    <name type="common">Dog</name>
    <name type="synonym">Canis familiaris</name>
    <dbReference type="NCBI Taxonomy" id="9615"/>
    <lineage>
        <taxon>Eukaryota</taxon>
        <taxon>Metazoa</taxon>
        <taxon>Chordata</taxon>
        <taxon>Craniata</taxon>
        <taxon>Vertebrata</taxon>
        <taxon>Euteleostomi</taxon>
        <taxon>Mammalia</taxon>
        <taxon>Eutheria</taxon>
        <taxon>Laurasiatheria</taxon>
        <taxon>Carnivora</taxon>
        <taxon>Caniformia</taxon>
        <taxon>Canidae</taxon>
        <taxon>Canis</taxon>
    </lineage>
</organism>
<comment type="function">
    <text evidence="6 7">Involved in the regulation of both adhesion and cell morphology and cancer progression. Functions as an anti-adhesive molecule that maintains an open filtration pathway between neighboring foot processes in the podocyte by charge repulsion. Acts as a pro-adhesive molecule, enhancing the adherence of cells to immobilized ligands, increasing the rate of migration and cell-cell contacts in an integrin-dependent manner. Induces the formation of apical actin-dependent microvilli. Involved in the formation of a preapical plasma membrane subdomain to set up initial epithelial polarization and the apical lumen formation during renal tubulogenesis. Plays a role in cancer development and aggressiveness by inducing cell migration and invasion through its interaction with the actin-binding protein EZR. Affects EZR-dependent signaling events, leading to increased activities of the MAPK and PI3K pathways in cancer cells.</text>
</comment>
<comment type="subunit">
    <text evidence="1 6 8">Found in a complex with EZR, PODXL and NHERF2. Associates with the actin cytoskeleton through complex formation with EZR and NHERF2. Interacts (via the C-terminal PDZ-binding motif DTHL) with NHERF1 (via the PDZ domains); interaction is not detected in glomerular epithelium cells. Interacts (via the C-terminal PDZ-binding motif DTHL) with NHERF2 (via the PDZ 1 domain); interaction is detected in glomerular epithelium cells. Interacts with EZR (By similarity). Monomer; when associated with the membrane raft. Oligomer; when integrated in the apical membrane. Interacts with NHERF2. Interacts (via the C-terminal PDZ-binding motif DTHL) with NHERF1 (via the PDZ domains); the interaction take place early in the secretory pathway and is necessary for its apical membrane sorting.</text>
</comment>
<comment type="subcellular location">
    <subcellularLocation>
        <location>Apical cell membrane</location>
    </subcellularLocation>
    <subcellularLocation>
        <location>Membrane raft</location>
    </subcellularLocation>
    <subcellularLocation>
        <location evidence="1">Cell projection</location>
        <location evidence="1">Lamellipodium</location>
    </subcellularLocation>
    <subcellularLocation>
        <location evidence="1">Cell projection</location>
        <location evidence="1">Filopodium</location>
    </subcellularLocation>
    <subcellularLocation>
        <location evidence="1">Cell projection</location>
        <location evidence="1">Ruffle</location>
    </subcellularLocation>
    <subcellularLocation>
        <location evidence="1">Cell projection</location>
        <location evidence="1">Microvillus</location>
    </subcellularLocation>
    <subcellularLocation>
        <location evidence="9">Membrane</location>
        <topology evidence="9">Single-pass type I membrane protein</topology>
    </subcellularLocation>
    <text evidence="1">Forms granular, punctuated pattern, forming patches, preferentially adopting a polar distribution, located on the migrating poles of the cell or forming clusters along the terminal ends of filipodia establishing contact with the endothelial cells. Colocalizes with the submembrane actin of lamellipodia, particularly associated with ruffles. Colocalizes with vinculin at protrusions of cells. Colocalizes with ITGB1. Colocalizes with actin filaments, ezrin and NHERF1 in a punctate pattern at the apical cell surface where microvilli form. Colocalizes with EZR and NHERF2 at the apical cell membrane of glomerular epithelium cells (By similarity). In single attached epithelial cells is restricted to a preapical pole on the free plasma membrane whereas other apical and basolateral proteins are not yet polarized. Colocalizes with NHERF2 at the apical plasma membrane during epithelial polarization. Colocalizes with NHERF1 at the trans-Golgi network (transiently) and at the apical plasma membrane. Its association with the membrane raft is transient. Colocalizes with PARD3, PRKCI, EXOC5, OCLN, RAB11A and RAB8A in apical membrane initiation sites (AMIS) during the generation of apical surface and luminogenesis (By similarity).</text>
</comment>
<comment type="tissue specificity">
    <text evidence="7">Expressed in glomerular and tubular epithelial cells and peritubular capillaries of the kidney (at protein level). Expressed in heart, lung, renal cortex and medulla, kidney and muscle.</text>
</comment>
<comment type="domain">
    <text evidence="1">The large highly anionic extracellular domain allows to maintain open filtration pathways between neighboring podocyte foot processes. The cytoplasmic C-terminus PDZ-binding motif (DTHL) is essential for interaction with NHERF1 and for targeting NHERF1 to the apical cell membrane. The extracellular domain is necessary for microvillus formation (By similarity). Both the O-glycan-rich domain of the extracellular domain and the C-terminus PDZ-binding motif (DTHL) in the cytoplasmic tail harbor an apical sorting signal. The cytoplasmic domain is necessary for the apical membrane targeting and renal tubulogenesis.</text>
</comment>
<comment type="PTM">
    <text evidence="7 8">N- and O-linked glycosylated. Sialoglycoprotein.</text>
</comment>
<comment type="similarity">
    <text evidence="9">Belongs to the podocalyxin family.</text>
</comment>
<sequence length="571" mass="59906">MRPAPPPPLLLLLLLLPPPSLSHDGTIIAATSPTSGQPSTELPGGKGLITTAKTIQNTDLAITGEKVMSATVSKGPLPGSSNSVSMTLAPTQKNTVIAPDQDEKVSTNPTIATSDSKGIPDLNKSILPSATNSMKPDTPVTQTAGPGAQGNPGTTVSHMTSENTEQTTSQPPPQVKPSSITPALTSIITPTSPRQPSANSTTLKPPESSSESPDKSHTASSSLGTKVVPSSSLYGTSPTRTSSVTFWGGPQSSSGTPPVPAPTPRPAATSSSTPGISSVPGTTSLPSETESLESPSSESPSQPPKLRPTGPPSSGSSGPAASLPDEGPRSSSTQRAATAPRAPSVPSPTSAQGDDRIKCESPGRLTDKMLLLNLTRSGLCAGNNSDDKLITLLCRAAKATFNPAQDQCHIRLVPIQDTQAVAIKEITVQTNLLPRDVYELLKDKWDELKEVGVSNMKLGDQGPPEETEDRFSMPLIITIVCMASFLLLVAALYGCCHQRLSQRKDQQRLTEELQTVENGYHDNPTLEVMETSSEMQEKKVVNLNGELGDSWIVPLDNLAKDDLDEEEDTHL</sequence>
<reference key="1">
    <citation type="journal article" date="2005" name="J. Am. Soc. Nephrol.">
        <title>Molecular identification of canine podocalyxin-like protein 1 as a renal tubulogenic regulator.</title>
        <authorList>
            <person name="Cheng H.Y."/>
            <person name="Lin Y.Y."/>
            <person name="Yu C.Y."/>
            <person name="Chen J.Y."/>
            <person name="Shen K.F."/>
            <person name="Lin W.L."/>
            <person name="Liao H.K."/>
            <person name="Chen Y.J."/>
            <person name="Liu C.H."/>
            <person name="Pang V.F."/>
            <person name="Jou T.S."/>
        </authorList>
    </citation>
    <scope>NUCLEOTIDE SEQUENCE [MRNA]</scope>
    <scope>PROTEIN SEQUENCE OF 398-406; 448-466 AND 525-538</scope>
    <scope>FUNCTION</scope>
    <scope>SUBCELLULAR LOCATION</scope>
    <scope>GLYCOSYLATION AT ASN-199; ASN-373 AND ASN-383</scope>
    <scope>MUTAGENESIS OF ASN-123; ASN-199; ASN-373 AND ASN-383</scope>
    <scope>TISSUE SPECIFICITY</scope>
</reference>
<reference key="2">
    <citation type="journal article" date="2005" name="J. Cell Biol.">
        <title>Gp135/podocalyxin and NHERF-2 participate in the formation of a preapical domain during polarization of MDCK cells.</title>
        <authorList>
            <person name="Meder D."/>
            <person name="Shevchenko A."/>
            <person name="Simons K."/>
            <person name="Fuellekrug J."/>
        </authorList>
    </citation>
    <scope>FUNCTION</scope>
    <scope>INTERACTION WITH NHERF2</scope>
    <scope>SUBCELLULAR LOCATION</scope>
</reference>
<reference key="3">
    <citation type="journal article" date="2007" name="Mol. Biol. Cell">
        <title>A bipartite signal regulates the faithful delivery of apical domain marker podocalyxin/Gp135.</title>
        <authorList>
            <person name="Yu C.Y."/>
            <person name="Chen J.Y."/>
            <person name="Lin Y.Y."/>
            <person name="Shen K.F."/>
            <person name="Lin W.L."/>
            <person name="Chien C.L."/>
            <person name="ter Beest M.B."/>
            <person name="Jou T.S."/>
        </authorList>
    </citation>
    <scope>SUBUNIT</scope>
    <scope>INTERACTION WITH NHERF1</scope>
    <scope>GLYCOSYLATION AT ASN-199; ASN-373 AND ASN-383</scope>
    <scope>MUTAGENESIS OF ASN-199; ASN-373 AND ASN-383</scope>
</reference>
<accession>Q52S86</accession>